<reference key="1">
    <citation type="journal article" date="2009" name="J. Bacteriol.">
        <title>Complete genome sequence and comparative genome analysis of enteropathogenic Escherichia coli O127:H6 strain E2348/69.</title>
        <authorList>
            <person name="Iguchi A."/>
            <person name="Thomson N.R."/>
            <person name="Ogura Y."/>
            <person name="Saunders D."/>
            <person name="Ooka T."/>
            <person name="Henderson I.R."/>
            <person name="Harris D."/>
            <person name="Asadulghani M."/>
            <person name="Kurokawa K."/>
            <person name="Dean P."/>
            <person name="Kenny B."/>
            <person name="Quail M.A."/>
            <person name="Thurston S."/>
            <person name="Dougan G."/>
            <person name="Hayashi T."/>
            <person name="Parkhill J."/>
            <person name="Frankel G."/>
        </authorList>
    </citation>
    <scope>NUCLEOTIDE SEQUENCE [LARGE SCALE GENOMIC DNA]</scope>
    <source>
        <strain>E2348/69 / EPEC</strain>
    </source>
</reference>
<keyword id="KW-0997">Cell inner membrane</keyword>
<keyword id="KW-1003">Cell membrane</keyword>
<keyword id="KW-0328">Glycosyltransferase</keyword>
<keyword id="KW-0441">Lipid A biosynthesis</keyword>
<keyword id="KW-0444">Lipid biosynthesis</keyword>
<keyword id="KW-0443">Lipid metabolism</keyword>
<keyword id="KW-0448">Lipopolysaccharide biosynthesis</keyword>
<keyword id="KW-0472">Membrane</keyword>
<keyword id="KW-1185">Reference proteome</keyword>
<keyword id="KW-0808">Transferase</keyword>
<keyword id="KW-0812">Transmembrane</keyword>
<keyword id="KW-1133">Transmembrane helix</keyword>
<comment type="function">
    <text evidence="1">Catalyzes the transfer of the L-Ara4N moiety of the glycolipid undecaprenyl phosphate-alpha-L-Ara4N to lipid A. The modified arabinose is attached to lipid A and is required for resistance to polymyxin and cationic antimicrobial peptides.</text>
</comment>
<comment type="catalytic activity">
    <reaction evidence="1">
        <text>4-amino-4-deoxy-alpha-L-arabinopyranosyl di-trans,octa-cis-undecaprenyl phosphate + lipid IVA = lipid IIA + di-trans,octa-cis-undecaprenyl phosphate.</text>
        <dbReference type="EC" id="2.4.2.43"/>
    </reaction>
</comment>
<comment type="pathway">
    <text evidence="1">Lipopolysaccharide metabolism; 4-amino-4-deoxy-beta-L-arabinose-lipid A biosynthesis.</text>
</comment>
<comment type="subcellular location">
    <subcellularLocation>
        <location evidence="1">Cell inner membrane</location>
        <topology evidence="1">Multi-pass membrane protein</topology>
    </subcellularLocation>
</comment>
<comment type="similarity">
    <text evidence="1">Belongs to the glycosyltransferase 83 family.</text>
</comment>
<feature type="chain" id="PRO_0000379995" description="Undecaprenyl phosphate-alpha-4-amino-4-deoxy-L-arabinose arabinosyl transferase">
    <location>
        <begin position="1"/>
        <end position="550"/>
    </location>
</feature>
<feature type="transmembrane region" description="Helical" evidence="1">
    <location>
        <begin position="7"/>
        <end position="27"/>
    </location>
</feature>
<feature type="transmembrane region" description="Helical" evidence="1">
    <location>
        <begin position="81"/>
        <end position="101"/>
    </location>
</feature>
<feature type="transmembrane region" description="Helical" evidence="1">
    <location>
        <begin position="113"/>
        <end position="133"/>
    </location>
</feature>
<feature type="transmembrane region" description="Helical" evidence="1">
    <location>
        <begin position="134"/>
        <end position="154"/>
    </location>
</feature>
<feature type="transmembrane region" description="Helical" evidence="1">
    <location>
        <begin position="165"/>
        <end position="185"/>
    </location>
</feature>
<feature type="transmembrane region" description="Helical" evidence="1">
    <location>
        <begin position="204"/>
        <end position="224"/>
    </location>
</feature>
<feature type="transmembrane region" description="Helical" evidence="1">
    <location>
        <begin position="263"/>
        <end position="283"/>
    </location>
</feature>
<feature type="transmembrane region" description="Helical" evidence="1">
    <location>
        <begin position="288"/>
        <end position="308"/>
    </location>
</feature>
<feature type="transmembrane region" description="Helical" evidence="1">
    <location>
        <begin position="315"/>
        <end position="335"/>
    </location>
</feature>
<feature type="transmembrane region" description="Helical" evidence="1">
    <location>
        <begin position="346"/>
        <end position="366"/>
    </location>
</feature>
<feature type="transmembrane region" description="Helical" evidence="1">
    <location>
        <begin position="382"/>
        <end position="402"/>
    </location>
</feature>
<feature type="transmembrane region" description="Helical" evidence="1">
    <location>
        <begin position="406"/>
        <end position="426"/>
    </location>
</feature>
<gene>
    <name evidence="1" type="primary">arnT</name>
    <name type="ordered locus">E2348C_2401</name>
</gene>
<evidence type="ECO:0000255" key="1">
    <source>
        <dbReference type="HAMAP-Rule" id="MF_01165"/>
    </source>
</evidence>
<name>ARNT_ECO27</name>
<proteinExistence type="inferred from homology"/>
<accession>B7UFR9</accession>
<dbReference type="EC" id="2.4.2.43" evidence="1"/>
<dbReference type="EMBL" id="FM180568">
    <property type="protein sequence ID" value="CAS09949.1"/>
    <property type="molecule type" value="Genomic_DNA"/>
</dbReference>
<dbReference type="RefSeq" id="WP_000844015.1">
    <property type="nucleotide sequence ID" value="NC_011601.1"/>
</dbReference>
<dbReference type="SMR" id="B7UFR9"/>
<dbReference type="CAZy" id="GT83">
    <property type="family name" value="Glycosyltransferase Family 83"/>
</dbReference>
<dbReference type="KEGG" id="ecg:E2348C_2401"/>
<dbReference type="HOGENOM" id="CLU_019200_2_1_6"/>
<dbReference type="UniPathway" id="UPA00037"/>
<dbReference type="Proteomes" id="UP000008205">
    <property type="component" value="Chromosome"/>
</dbReference>
<dbReference type="GO" id="GO:0005886">
    <property type="term" value="C:plasma membrane"/>
    <property type="evidence" value="ECO:0007669"/>
    <property type="project" value="UniProtKB-SubCell"/>
</dbReference>
<dbReference type="GO" id="GO:0103015">
    <property type="term" value="F:4-amino-4-deoxy-L-arabinose transferase activity"/>
    <property type="evidence" value="ECO:0007669"/>
    <property type="project" value="UniProtKB-EC"/>
</dbReference>
<dbReference type="GO" id="GO:0000030">
    <property type="term" value="F:mannosyltransferase activity"/>
    <property type="evidence" value="ECO:0007669"/>
    <property type="project" value="InterPro"/>
</dbReference>
<dbReference type="GO" id="GO:0009245">
    <property type="term" value="P:lipid A biosynthetic process"/>
    <property type="evidence" value="ECO:0007669"/>
    <property type="project" value="UniProtKB-UniRule"/>
</dbReference>
<dbReference type="GO" id="GO:0009103">
    <property type="term" value="P:lipopolysaccharide biosynthetic process"/>
    <property type="evidence" value="ECO:0007669"/>
    <property type="project" value="UniProtKB-KW"/>
</dbReference>
<dbReference type="GO" id="GO:0006493">
    <property type="term" value="P:protein O-linked glycosylation"/>
    <property type="evidence" value="ECO:0007669"/>
    <property type="project" value="InterPro"/>
</dbReference>
<dbReference type="GO" id="GO:0010041">
    <property type="term" value="P:response to iron(III) ion"/>
    <property type="evidence" value="ECO:0007669"/>
    <property type="project" value="TreeGrafter"/>
</dbReference>
<dbReference type="HAMAP" id="MF_01165">
    <property type="entry name" value="ArnT_transfer"/>
    <property type="match status" value="1"/>
</dbReference>
<dbReference type="InterPro" id="IPR022839">
    <property type="entry name" value="ArnT_tfrase"/>
</dbReference>
<dbReference type="InterPro" id="IPR003342">
    <property type="entry name" value="Glyco_trans_39/83"/>
</dbReference>
<dbReference type="InterPro" id="IPR050297">
    <property type="entry name" value="LipidA_mod_glycosyltrf_83"/>
</dbReference>
<dbReference type="NCBIfam" id="NF009784">
    <property type="entry name" value="PRK13279.1"/>
    <property type="match status" value="1"/>
</dbReference>
<dbReference type="PANTHER" id="PTHR33908">
    <property type="entry name" value="MANNOSYLTRANSFERASE YKCB-RELATED"/>
    <property type="match status" value="1"/>
</dbReference>
<dbReference type="PANTHER" id="PTHR33908:SF3">
    <property type="entry name" value="UNDECAPRENYL PHOSPHATE-ALPHA-4-AMINO-4-DEOXY-L-ARABINOSE ARABINOSYL TRANSFERASE"/>
    <property type="match status" value="1"/>
</dbReference>
<dbReference type="Pfam" id="PF02366">
    <property type="entry name" value="PMT"/>
    <property type="match status" value="1"/>
</dbReference>
<organism>
    <name type="scientific">Escherichia coli O127:H6 (strain E2348/69 / EPEC)</name>
    <dbReference type="NCBI Taxonomy" id="574521"/>
    <lineage>
        <taxon>Bacteria</taxon>
        <taxon>Pseudomonadati</taxon>
        <taxon>Pseudomonadota</taxon>
        <taxon>Gammaproteobacteria</taxon>
        <taxon>Enterobacterales</taxon>
        <taxon>Enterobacteriaceae</taxon>
        <taxon>Escherichia</taxon>
    </lineage>
</organism>
<sequence length="550" mass="62558">MKSVRYLIGLFAFIACYYLLPISTRLLWQPDETRYAEISREMLASGDWIVPHLLGLRYFEKPIAGYWINSIGQWLFGANNFGVRAGVIFATLLTAALVTWFTLRLWRDKRLALLAAVIYLSLFIVYAIGTYAVLDPFIAFWLVAGMCSFWLAMQAQTWKGKSAGFLLLGITCGMGVMTKGFLALAVPVLSVLPWVATQKRWKDLFIYGWLAVISCILTVLPWGLAIAQREPDFWHYFFWVEHIQRFAMDDAQHRAPFWYYLPVIIAGSLPWLGLLPGALYAGWQNRKHSATVYLLSWTIMPLLFFSVAKGKLPTYILSCFAPLAMLMAHYALLAAKNNPLALRINGWINIAFGVTGIIATFVVSPWGPMNTPVWQTFESYKVFCAWSIFSLWAFFGWYTLTNVEKTWPFAALCPLGLALLVGFSIPDRVMEGKHPQFFVEMTQESLQPSRYILTDSVGVAAGLAWSLQRDDIIMYRQTGELKYGLNYPDAKGRFVSGDEFANWLNQHRQEGIITLVLSVDRDEDINSLAIPSADVIDRQERLVLIQYRPK</sequence>
<protein>
    <recommendedName>
        <fullName evidence="1">Undecaprenyl phosphate-alpha-4-amino-4-deoxy-L-arabinose arabinosyl transferase</fullName>
        <ecNumber evidence="1">2.4.2.43</ecNumber>
    </recommendedName>
    <alternativeName>
        <fullName evidence="1">4-amino-4-deoxy-L-arabinose lipid A transferase</fullName>
    </alternativeName>
    <alternativeName>
        <fullName evidence="1">Lipid IV(A) 4-amino-4-deoxy-L-arabinosyltransferase</fullName>
    </alternativeName>
    <alternativeName>
        <fullName evidence="1">Undecaprenyl phosphate-alpha-L-Ara4N transferase</fullName>
    </alternativeName>
</protein>